<feature type="chain" id="PRO_0000289047" description="Putative inositol monophosphatase 3">
    <location>
        <begin position="1"/>
        <end position="355"/>
    </location>
</feature>
<feature type="transmembrane region" description="Helical" evidence="2">
    <location>
        <begin position="16"/>
        <end position="36"/>
    </location>
</feature>
<feature type="binding site" evidence="1">
    <location>
        <position position="127"/>
    </location>
    <ligand>
        <name>Mg(2+)</name>
        <dbReference type="ChEBI" id="CHEBI:18420"/>
        <label>1</label>
    </ligand>
</feature>
<feature type="binding site" evidence="1">
    <location>
        <position position="127"/>
    </location>
    <ligand>
        <name>substrate</name>
    </ligand>
</feature>
<feature type="binding site" evidence="1">
    <location>
        <position position="167"/>
    </location>
    <ligand>
        <name>Mg(2+)</name>
        <dbReference type="ChEBI" id="CHEBI:18420"/>
        <label>1</label>
    </ligand>
</feature>
<feature type="binding site" evidence="1">
    <location>
        <position position="167"/>
    </location>
    <ligand>
        <name>Mg(2+)</name>
        <dbReference type="ChEBI" id="CHEBI:18420"/>
        <label>2</label>
    </ligand>
</feature>
<feature type="binding site" evidence="1">
    <location>
        <begin position="169"/>
        <end position="172"/>
    </location>
    <ligand>
        <name>substrate</name>
    </ligand>
</feature>
<feature type="binding site" evidence="1">
    <location>
        <position position="169"/>
    </location>
    <ligand>
        <name>Mg(2+)</name>
        <dbReference type="ChEBI" id="CHEBI:18420"/>
        <label>1</label>
    </ligand>
</feature>
<feature type="binding site" evidence="1">
    <location>
        <position position="170"/>
    </location>
    <ligand>
        <name>Mg(2+)</name>
        <dbReference type="ChEBI" id="CHEBI:18420"/>
        <label>2</label>
    </ligand>
</feature>
<feature type="binding site" evidence="1">
    <location>
        <position position="292"/>
    </location>
    <ligand>
        <name>Mg(2+)</name>
        <dbReference type="ChEBI" id="CHEBI:18420"/>
        <label>2</label>
    </ligand>
</feature>
<feature type="binding site" evidence="1">
    <location>
        <position position="292"/>
    </location>
    <ligand>
        <name>substrate</name>
    </ligand>
</feature>
<proteinExistence type="inferred from homology"/>
<comment type="catalytic activity">
    <reaction>
        <text>a myo-inositol phosphate + H2O = myo-inositol + phosphate</text>
        <dbReference type="Rhea" id="RHEA:24056"/>
        <dbReference type="ChEBI" id="CHEBI:15377"/>
        <dbReference type="ChEBI" id="CHEBI:17268"/>
        <dbReference type="ChEBI" id="CHEBI:43474"/>
        <dbReference type="ChEBI" id="CHEBI:84139"/>
        <dbReference type="EC" id="3.1.3.25"/>
    </reaction>
</comment>
<comment type="cofactor">
    <cofactor evidence="1">
        <name>Mg(2+)</name>
        <dbReference type="ChEBI" id="CHEBI:18420"/>
    </cofactor>
</comment>
<comment type="pathway">
    <text>Polyol metabolism; myo-inositol biosynthesis; myo-inositol from D-glucose 6-phosphate: step 2/2.</text>
</comment>
<comment type="subcellular location">
    <subcellularLocation>
        <location evidence="3">Membrane</location>
        <topology evidence="3">Single-pass membrane protein</topology>
    </subcellularLocation>
</comment>
<comment type="similarity">
    <text evidence="3">Belongs to the inositol monophosphatase superfamily.</text>
</comment>
<comment type="sequence caution" evidence="3">
    <conflict type="erroneous gene model prediction">
        <sequence resource="EMBL-CDS" id="EAL32331"/>
    </conflict>
</comment>
<name>IMPA3_DROPS</name>
<keyword id="KW-0378">Hydrolase</keyword>
<keyword id="KW-0460">Magnesium</keyword>
<keyword id="KW-0472">Membrane</keyword>
<keyword id="KW-0479">Metal-binding</keyword>
<keyword id="KW-1185">Reference proteome</keyword>
<keyword id="KW-0812">Transmembrane</keyword>
<keyword id="KW-1133">Transmembrane helix</keyword>
<protein>
    <recommendedName>
        <fullName>Putative inositol monophosphatase 3</fullName>
        <shortName>IMP 3</shortName>
        <shortName>IMPase 3</shortName>
        <ecNumber>3.1.3.25</ecNumber>
    </recommendedName>
    <alternativeName>
        <fullName>Inositol-1(or 4)-monophosphatase 3</fullName>
    </alternativeName>
    <alternativeName>
        <fullName>Myo-inositol monophosphatase A3</fullName>
    </alternativeName>
</protein>
<dbReference type="EC" id="3.1.3.25"/>
<dbReference type="EMBL" id="CH379063">
    <property type="protein sequence ID" value="EAL32331.2"/>
    <property type="status" value="ALT_SEQ"/>
    <property type="molecule type" value="Genomic_DNA"/>
</dbReference>
<dbReference type="SMR" id="Q29JH0"/>
<dbReference type="FunCoup" id="Q29JH0">
    <property type="interactions" value="1469"/>
</dbReference>
<dbReference type="STRING" id="46245.Q29JH0"/>
<dbReference type="eggNOG" id="KOG3853">
    <property type="taxonomic scope" value="Eukaryota"/>
</dbReference>
<dbReference type="InParanoid" id="Q29JH0"/>
<dbReference type="UniPathway" id="UPA00823">
    <property type="reaction ID" value="UER00788"/>
</dbReference>
<dbReference type="Proteomes" id="UP000001819">
    <property type="component" value="Unplaced"/>
</dbReference>
<dbReference type="GO" id="GO:0005737">
    <property type="term" value="C:cytoplasm"/>
    <property type="evidence" value="ECO:0000250"/>
    <property type="project" value="UniProtKB"/>
</dbReference>
<dbReference type="GO" id="GO:0012505">
    <property type="term" value="C:endomembrane system"/>
    <property type="evidence" value="ECO:0007669"/>
    <property type="project" value="TreeGrafter"/>
</dbReference>
<dbReference type="GO" id="GO:0016020">
    <property type="term" value="C:membrane"/>
    <property type="evidence" value="ECO:0007669"/>
    <property type="project" value="UniProtKB-SubCell"/>
</dbReference>
<dbReference type="GO" id="GO:0008254">
    <property type="term" value="F:3'-nucleotidase activity"/>
    <property type="evidence" value="ECO:0007669"/>
    <property type="project" value="TreeGrafter"/>
</dbReference>
<dbReference type="GO" id="GO:0008934">
    <property type="term" value="F:inositol monophosphate 1-phosphatase activity"/>
    <property type="evidence" value="ECO:0000250"/>
    <property type="project" value="UniProtKB"/>
</dbReference>
<dbReference type="GO" id="GO:0046872">
    <property type="term" value="F:metal ion binding"/>
    <property type="evidence" value="ECO:0007669"/>
    <property type="project" value="UniProtKB-KW"/>
</dbReference>
<dbReference type="GO" id="GO:0006021">
    <property type="term" value="P:inositol biosynthetic process"/>
    <property type="evidence" value="ECO:0007669"/>
    <property type="project" value="UniProtKB-UniPathway"/>
</dbReference>
<dbReference type="GO" id="GO:0006796">
    <property type="term" value="P:phosphate-containing compound metabolic process"/>
    <property type="evidence" value="ECO:0000250"/>
    <property type="project" value="UniProtKB"/>
</dbReference>
<dbReference type="GO" id="GO:0006661">
    <property type="term" value="P:phosphatidylinositol biosynthetic process"/>
    <property type="evidence" value="ECO:0000250"/>
    <property type="project" value="UniProtKB"/>
</dbReference>
<dbReference type="GO" id="GO:0046854">
    <property type="term" value="P:phosphatidylinositol phosphate biosynthetic process"/>
    <property type="evidence" value="ECO:0007669"/>
    <property type="project" value="InterPro"/>
</dbReference>
<dbReference type="GO" id="GO:0007165">
    <property type="term" value="P:signal transduction"/>
    <property type="evidence" value="ECO:0000250"/>
    <property type="project" value="UniProtKB"/>
</dbReference>
<dbReference type="CDD" id="cd01640">
    <property type="entry name" value="IPPase"/>
    <property type="match status" value="1"/>
</dbReference>
<dbReference type="FunFam" id="3.30.540.10:FF:000012">
    <property type="entry name" value="Blast:Putative inositol monophosphatase 3"/>
    <property type="match status" value="1"/>
</dbReference>
<dbReference type="FunFam" id="3.40.190.80:FF:000007">
    <property type="entry name" value="Blast:Putative inositol monophosphatase 3"/>
    <property type="match status" value="1"/>
</dbReference>
<dbReference type="Gene3D" id="3.40.190.80">
    <property type="match status" value="1"/>
</dbReference>
<dbReference type="Gene3D" id="3.30.540.10">
    <property type="entry name" value="Fructose-1,6-Bisphosphatase, subunit A, domain 1"/>
    <property type="match status" value="1"/>
</dbReference>
<dbReference type="InterPro" id="IPR050725">
    <property type="entry name" value="CysQ/Inositol_MonoPase"/>
</dbReference>
<dbReference type="InterPro" id="IPR000760">
    <property type="entry name" value="Inositol_monophosphatase-like"/>
</dbReference>
<dbReference type="InterPro" id="IPR020550">
    <property type="entry name" value="Inositol_monophosphatase_CS"/>
</dbReference>
<dbReference type="PANTHER" id="PTHR43028">
    <property type="entry name" value="3'(2'),5'-BISPHOSPHATE NUCLEOTIDASE 1"/>
    <property type="match status" value="1"/>
</dbReference>
<dbReference type="PANTHER" id="PTHR43028:SF4">
    <property type="entry name" value="INOSITOL MONOPHOSPHATASE 3"/>
    <property type="match status" value="1"/>
</dbReference>
<dbReference type="Pfam" id="PF00459">
    <property type="entry name" value="Inositol_P"/>
    <property type="match status" value="1"/>
</dbReference>
<dbReference type="SUPFAM" id="SSF56655">
    <property type="entry name" value="Carbohydrate phosphatase"/>
    <property type="match status" value="1"/>
</dbReference>
<dbReference type="PROSITE" id="PS00630">
    <property type="entry name" value="IMP_2"/>
    <property type="match status" value="1"/>
</dbReference>
<reference key="1">
    <citation type="journal article" date="2005" name="Genome Res.">
        <title>Comparative genome sequencing of Drosophila pseudoobscura: chromosomal, gene, and cis-element evolution.</title>
        <authorList>
            <person name="Richards S."/>
            <person name="Liu Y."/>
            <person name="Bettencourt B.R."/>
            <person name="Hradecky P."/>
            <person name="Letovsky S."/>
            <person name="Nielsen R."/>
            <person name="Thornton K."/>
            <person name="Hubisz M.J."/>
            <person name="Chen R."/>
            <person name="Meisel R.P."/>
            <person name="Couronne O."/>
            <person name="Hua S."/>
            <person name="Smith M.A."/>
            <person name="Zhang P."/>
            <person name="Liu J."/>
            <person name="Bussemaker H.J."/>
            <person name="van Batenburg M.F."/>
            <person name="Howells S.L."/>
            <person name="Scherer S.E."/>
            <person name="Sodergren E."/>
            <person name="Matthews B.B."/>
            <person name="Crosby M.A."/>
            <person name="Schroeder A.J."/>
            <person name="Ortiz-Barrientos D."/>
            <person name="Rives C.M."/>
            <person name="Metzker M.L."/>
            <person name="Muzny D.M."/>
            <person name="Scott G."/>
            <person name="Steffen D."/>
            <person name="Wheeler D.A."/>
            <person name="Worley K.C."/>
            <person name="Havlak P."/>
            <person name="Durbin K.J."/>
            <person name="Egan A."/>
            <person name="Gill R."/>
            <person name="Hume J."/>
            <person name="Morgan M.B."/>
            <person name="Miner G."/>
            <person name="Hamilton C."/>
            <person name="Huang Y."/>
            <person name="Waldron L."/>
            <person name="Verduzco D."/>
            <person name="Clerc-Blankenburg K.P."/>
            <person name="Dubchak I."/>
            <person name="Noor M.A.F."/>
            <person name="Anderson W."/>
            <person name="White K.P."/>
            <person name="Clark A.G."/>
            <person name="Schaeffer S.W."/>
            <person name="Gelbart W.M."/>
            <person name="Weinstock G.M."/>
            <person name="Gibbs R.A."/>
        </authorList>
    </citation>
    <scope>NUCLEOTIDE SEQUENCE [LARGE SCALE GENOMIC DNA]</scope>
    <source>
        <strain>MV2-25 / Tucson 14011-0121.94</strain>
    </source>
</reference>
<gene>
    <name type="ORF">GA13929</name>
</gene>
<organism>
    <name type="scientific">Drosophila pseudoobscura pseudoobscura</name>
    <name type="common">Fruit fly</name>
    <dbReference type="NCBI Taxonomy" id="46245"/>
    <lineage>
        <taxon>Eukaryota</taxon>
        <taxon>Metazoa</taxon>
        <taxon>Ecdysozoa</taxon>
        <taxon>Arthropoda</taxon>
        <taxon>Hexapoda</taxon>
        <taxon>Insecta</taxon>
        <taxon>Pterygota</taxon>
        <taxon>Neoptera</taxon>
        <taxon>Endopterygota</taxon>
        <taxon>Diptera</taxon>
        <taxon>Brachycera</taxon>
        <taxon>Muscomorpha</taxon>
        <taxon>Ephydroidea</taxon>
        <taxon>Drosophilidae</taxon>
        <taxon>Drosophila</taxon>
        <taxon>Sophophora</taxon>
    </lineage>
</organism>
<accession>Q29JH0</accession>
<evidence type="ECO:0000250" key="1"/>
<evidence type="ECO:0000255" key="2"/>
<evidence type="ECO:0000305" key="3"/>
<sequence>MSSSKMNGRSIRINRVPATIFAILLTIVLVYFLNFHQEERPAIYGKLRSDNPNRVNLRKMLIAAIQASQRGGLEVLDVARSRQLKVRSKGQTDEGVNDPFTDADGRSHCVMKQGLQRIFPRVRIFSEEDKEHCKESHSYDLDPTVLHETAQVPDVSVNAQDVTVWVDPLDATKEFTEELYEYVTTMVCVAVAGRPVIGVIHSPFNGQTAWAWVGNSMSEYLAGLHPPHGQENELPIITVSRSHTAGAKDLARGIFGEQVNLLTAAGAGYKVLQVVANNATAYLHTSKIKKWDICAGDAILHALGGTMTTLNDQLIRYGPDESPVNTEGLLATLEKHDKYMDQLVKYRTAHNGQLA</sequence>